<comment type="function">
    <text evidence="2">Involved in the glyoxylate assimilation cycle used to regenerate acetyl-CoA and produce pyruvate as universal precursor for biosynthesis. Catalyzes the reversible dehydration of beta-methylmalyl-CoA ((2R,3S)-beta-methylmalyl-CoA) to yield mesaconyl-CoA (2-methylfumaryl-CoA).</text>
</comment>
<comment type="catalytic activity">
    <reaction evidence="2">
        <text>(2R,3S)-beta-methylmalyl-CoA = 2-methylfumaryl-CoA + H2O</text>
        <dbReference type="Rhea" id="RHEA:38263"/>
        <dbReference type="ChEBI" id="CHEBI:15377"/>
        <dbReference type="ChEBI" id="CHEBI:75634"/>
        <dbReference type="ChEBI" id="CHEBI:75635"/>
        <dbReference type="EC" id="4.2.1.148"/>
    </reaction>
</comment>
<comment type="biophysicochemical properties">
    <phDependence>
        <text evidence="2">Optimum pH is 7.5.</text>
    </phDependence>
</comment>
<comment type="subunit">
    <text evidence="2 3">Homodimer.</text>
</comment>
<comment type="induction">
    <text evidence="2">Under autotrophic growth conditions.</text>
</comment>
<dbReference type="EC" id="4.2.1.148"/>
<dbReference type="EMBL" id="CP000909">
    <property type="protein sequence ID" value="ABY33427.1"/>
    <property type="molecule type" value="Genomic_DNA"/>
</dbReference>
<dbReference type="RefSeq" id="WP_012256083.1">
    <property type="nucleotide sequence ID" value="NC_010175.1"/>
</dbReference>
<dbReference type="RefSeq" id="YP_001633816.1">
    <property type="nucleotide sequence ID" value="NC_010175.1"/>
</dbReference>
<dbReference type="PDB" id="4E3E">
    <property type="method" value="X-ray"/>
    <property type="resolution" value="1.90 A"/>
    <property type="chains" value="A/B=1-352"/>
</dbReference>
<dbReference type="PDBsum" id="4E3E"/>
<dbReference type="SMR" id="A9WC34"/>
<dbReference type="STRING" id="324602.Caur_0173"/>
<dbReference type="EnsemblBacteria" id="ABY33427">
    <property type="protein sequence ID" value="ABY33427"/>
    <property type="gene ID" value="Caur_0173"/>
</dbReference>
<dbReference type="KEGG" id="cau:Caur_0173"/>
<dbReference type="PATRIC" id="fig|324602.8.peg.200"/>
<dbReference type="eggNOG" id="COG2030">
    <property type="taxonomic scope" value="Bacteria"/>
</dbReference>
<dbReference type="HOGENOM" id="CLU_067804_0_0_0"/>
<dbReference type="InParanoid" id="A9WC34"/>
<dbReference type="BioCyc" id="MetaCyc:MONOMER-17292"/>
<dbReference type="BRENDA" id="4.2.1.148">
    <property type="organism ID" value="1352"/>
</dbReference>
<dbReference type="EvolutionaryTrace" id="A9WC34"/>
<dbReference type="Proteomes" id="UP000002008">
    <property type="component" value="Chromosome"/>
</dbReference>
<dbReference type="GO" id="GO:0016833">
    <property type="term" value="F:oxo-acid-lyase activity"/>
    <property type="evidence" value="ECO:0000314"/>
    <property type="project" value="UniProtKB"/>
</dbReference>
<dbReference type="GO" id="GO:0043427">
    <property type="term" value="P:carbon fixation by 3-hydroxypropionate cycle"/>
    <property type="evidence" value="ECO:0000314"/>
    <property type="project" value="UniProtKB"/>
</dbReference>
<dbReference type="GO" id="GO:0009436">
    <property type="term" value="P:glyoxylate catabolic process"/>
    <property type="evidence" value="ECO:0000314"/>
    <property type="project" value="UniProtKB"/>
</dbReference>
<dbReference type="CDD" id="cd03451">
    <property type="entry name" value="FkbR2"/>
    <property type="match status" value="2"/>
</dbReference>
<dbReference type="Gene3D" id="3.10.129.10">
    <property type="entry name" value="Hotdog Thioesterase"/>
    <property type="match status" value="1"/>
</dbReference>
<dbReference type="InterPro" id="IPR029069">
    <property type="entry name" value="HotDog_dom_sf"/>
</dbReference>
<dbReference type="InterPro" id="IPR048274">
    <property type="entry name" value="MC_hydratase"/>
</dbReference>
<dbReference type="InterPro" id="IPR052342">
    <property type="entry name" value="MCH/BMMD"/>
</dbReference>
<dbReference type="InterPro" id="IPR016790">
    <property type="entry name" value="Thiol_ester_hydratase_Rv0216"/>
</dbReference>
<dbReference type="PANTHER" id="PTHR43664:SF1">
    <property type="entry name" value="BETA-METHYLMALYL-COA DEHYDRATASE"/>
    <property type="match status" value="1"/>
</dbReference>
<dbReference type="PANTHER" id="PTHR43664">
    <property type="entry name" value="MONOAMINE OXIDASE-RELATED"/>
    <property type="match status" value="1"/>
</dbReference>
<dbReference type="Pfam" id="PF19315">
    <property type="entry name" value="MC_hydratase"/>
    <property type="match status" value="1"/>
</dbReference>
<dbReference type="PIRSF" id="PIRSF021494">
    <property type="entry name" value="Rv0216_prd"/>
    <property type="match status" value="1"/>
</dbReference>
<dbReference type="SUPFAM" id="SSF54637">
    <property type="entry name" value="Thioesterase/thiol ester dehydrase-isomerase"/>
    <property type="match status" value="2"/>
</dbReference>
<organism>
    <name type="scientific">Chloroflexus aurantiacus (strain ATCC 29366 / DSM 635 / J-10-fl)</name>
    <dbReference type="NCBI Taxonomy" id="324602"/>
    <lineage>
        <taxon>Bacteria</taxon>
        <taxon>Bacillati</taxon>
        <taxon>Chloroflexota</taxon>
        <taxon>Chloroflexia</taxon>
        <taxon>Chloroflexales</taxon>
        <taxon>Chloroflexineae</taxon>
        <taxon>Chloroflexaceae</taxon>
        <taxon>Chloroflexus</taxon>
    </lineage>
</organism>
<protein>
    <recommendedName>
        <fullName>Beta-methylmalyl-CoA dehydratase</fullName>
        <ecNumber>4.2.1.148</ecNumber>
    </recommendedName>
    <alternativeName>
        <fullName>2-methylfumaryl-CoA hydratase</fullName>
    </alternativeName>
    <alternativeName>
        <fullName>Mesaconyl-CoA hydratase</fullName>
    </alternativeName>
</protein>
<feature type="chain" id="PRO_0000429581" description="Beta-methylmalyl-CoA dehydratase">
    <location>
        <begin position="1"/>
        <end position="352"/>
    </location>
</feature>
<feature type="domain" description="MaoC-like">
    <location>
        <begin position="16"/>
        <end position="129"/>
    </location>
</feature>
<feature type="binding site" evidence="1">
    <location>
        <begin position="62"/>
        <end position="65"/>
    </location>
    <ligand>
        <name>substrate</name>
    </ligand>
</feature>
<feature type="binding site" evidence="1">
    <location>
        <begin position="85"/>
        <end position="88"/>
    </location>
    <ligand>
        <name>substrate</name>
    </ligand>
</feature>
<feature type="binding site" evidence="1">
    <location>
        <begin position="96"/>
        <end position="98"/>
    </location>
    <ligand>
        <name>substrate</name>
    </ligand>
</feature>
<feature type="helix" evidence="4">
    <location>
        <begin position="11"/>
        <end position="13"/>
    </location>
</feature>
<feature type="strand" evidence="4">
    <location>
        <begin position="19"/>
        <end position="21"/>
    </location>
</feature>
<feature type="helix" evidence="4">
    <location>
        <begin position="30"/>
        <end position="40"/>
    </location>
</feature>
<feature type="helix" evidence="4">
    <location>
        <begin position="45"/>
        <end position="48"/>
    </location>
</feature>
<feature type="helix" evidence="4">
    <location>
        <begin position="50"/>
        <end position="55"/>
    </location>
</feature>
<feature type="helix" evidence="4">
    <location>
        <begin position="65"/>
        <end position="80"/>
    </location>
</feature>
<feature type="turn" evidence="4">
    <location>
        <begin position="81"/>
        <end position="83"/>
    </location>
</feature>
<feature type="strand" evidence="4">
    <location>
        <begin position="84"/>
        <end position="95"/>
    </location>
</feature>
<feature type="strand" evidence="4">
    <location>
        <begin position="104"/>
        <end position="116"/>
    </location>
</feature>
<feature type="strand" evidence="4">
    <location>
        <begin position="120"/>
        <end position="132"/>
    </location>
</feature>
<feature type="strand" evidence="4">
    <location>
        <begin position="138"/>
        <end position="149"/>
    </location>
</feature>
<feature type="helix" evidence="4">
    <location>
        <begin position="171"/>
        <end position="173"/>
    </location>
</feature>
<feature type="helix" evidence="4">
    <location>
        <begin position="182"/>
        <end position="184"/>
    </location>
</feature>
<feature type="helix" evidence="4">
    <location>
        <begin position="187"/>
        <end position="190"/>
    </location>
</feature>
<feature type="helix" evidence="4">
    <location>
        <begin position="196"/>
        <end position="198"/>
    </location>
</feature>
<feature type="strand" evidence="4">
    <location>
        <begin position="204"/>
        <end position="206"/>
    </location>
</feature>
<feature type="helix" evidence="4">
    <location>
        <begin position="215"/>
        <end position="224"/>
    </location>
</feature>
<feature type="helix" evidence="4">
    <location>
        <begin position="230"/>
        <end position="232"/>
    </location>
</feature>
<feature type="helix" evidence="4">
    <location>
        <begin position="235"/>
        <end position="238"/>
    </location>
</feature>
<feature type="strand" evidence="4">
    <location>
        <begin position="241"/>
        <end position="243"/>
    </location>
</feature>
<feature type="helix" evidence="4">
    <location>
        <begin position="250"/>
        <end position="265"/>
    </location>
</feature>
<feature type="strand" evidence="4">
    <location>
        <begin position="270"/>
        <end position="278"/>
    </location>
</feature>
<feature type="strand" evidence="4">
    <location>
        <begin position="288"/>
        <end position="300"/>
    </location>
</feature>
<feature type="strand" evidence="4">
    <location>
        <begin position="305"/>
        <end position="319"/>
    </location>
</feature>
<feature type="strand" evidence="4">
    <location>
        <begin position="322"/>
        <end position="325"/>
    </location>
</feature>
<feature type="strand" evidence="4">
    <location>
        <begin position="338"/>
        <end position="349"/>
    </location>
</feature>
<keyword id="KW-0002">3D-structure</keyword>
<keyword id="KW-0120">Carbon dioxide fixation</keyword>
<keyword id="KW-0456">Lyase</keyword>
<keyword id="KW-1185">Reference proteome</keyword>
<evidence type="ECO:0000250" key="1"/>
<evidence type="ECO:0000269" key="2">
    <source>
    </source>
</evidence>
<evidence type="ECO:0000269" key="3">
    <source ref="3"/>
</evidence>
<evidence type="ECO:0007829" key="4">
    <source>
        <dbReference type="PDB" id="4E3E"/>
    </source>
</evidence>
<sequence length="352" mass="38704">MSAKTNPGNFFEDFRLGQTIVHATPRTITEGDVALYTSLYGSRFALTSSTPFAQSLGLERAPIDSLLVFHIVFGKTVPDISLNAIANLGYAGGRFGAVVYPGDTLSTTSKVIGLRQNKDGKTGVVYVHSVGVNQWDEVVLEYIRWVMVRKRDPNAPAPETVVPDLPDSVPVTDLTVPYTVSAANYNLAHAGSNYLWDDYEVGEKIDHVDGVTIEEAEHMQATRLYQNTARVHFNLHVEREGRFGRRIVYGGHIISLARSLSFNGLANALSIAAINSGRHTNPSFAGDTIYAWSEILAKMAIPGRTDIGALRVRTVATKDRPCHDFPYRDAEGNYDPAVVLDFDYTVLMPRRG</sequence>
<accession>A9WC34</accession>
<name>MCH_CHLAA</name>
<reference key="1">
    <citation type="journal article" date="2011" name="BMC Genomics">
        <title>Complete genome sequence of the filamentous anoxygenic phototrophic bacterium Chloroflexus aurantiacus.</title>
        <authorList>
            <person name="Tang K.H."/>
            <person name="Barry K."/>
            <person name="Chertkov O."/>
            <person name="Dalin E."/>
            <person name="Han C.S."/>
            <person name="Hauser L.J."/>
            <person name="Honchak B.M."/>
            <person name="Karbach L.E."/>
            <person name="Land M.L."/>
            <person name="Lapidus A."/>
            <person name="Larimer F.W."/>
            <person name="Mikhailova N."/>
            <person name="Pitluck S."/>
            <person name="Pierson B.K."/>
            <person name="Blankenship R.E."/>
        </authorList>
    </citation>
    <scope>NUCLEOTIDE SEQUENCE [LARGE SCALE GENOMIC DNA]</scope>
    <source>
        <strain>ATCC 29366 / DSM 635 / J-10-fl</strain>
    </source>
</reference>
<reference key="2">
    <citation type="journal article" date="2008" name="J. Bacteriol.">
        <title>Mesaconyl-coenzyme A hydratase, a new enzyme of two central carbon metabolic pathways in bacteria.</title>
        <authorList>
            <person name="Zarzycki J."/>
            <person name="Schlichting A."/>
            <person name="Strychalsky N."/>
            <person name="Muller M."/>
            <person name="Alber B.E."/>
            <person name="Fuchs G."/>
        </authorList>
    </citation>
    <scope>FUNCTION</scope>
    <scope>CATALYTIC ACTIVITY</scope>
    <scope>BIOPHYSICOCHEMICAL PROPERTIES</scope>
    <scope>INDUCTION</scope>
    <scope>SUBUNIT</scope>
    <source>
        <strain>DSM 636 / Ok-70-fl</strain>
    </source>
</reference>
<reference key="3">
    <citation type="submission" date="2012-03" db="PDB data bank">
        <title>Crystal structure of putative MaoC domain protein dehydratase from Chloroflexus aurantiacus J-10-fl.</title>
        <authorList>
            <person name="Malashkevich V.N."/>
            <person name="Bhosle R."/>
            <person name="Toro R."/>
            <person name="Hillerich B."/>
            <person name="Gizzi A."/>
            <person name="Garforth S."/>
            <person name="Kar A."/>
            <person name="Chan M.K."/>
            <person name="Lafluer J."/>
            <person name="Patel H."/>
            <person name="Matikainen B."/>
            <person name="Chamala S."/>
            <person name="Lim S."/>
            <person name="Celikgil A."/>
            <person name="Villegas G."/>
            <person name="Evans B."/>
            <person name="Zenchek W."/>
            <person name="Love J."/>
            <person name="Fiser A."/>
            <person name="Khafizov K."/>
            <person name="Seidel R."/>
            <person name="Bonanno J.B."/>
            <person name="Almo S.C."/>
        </authorList>
    </citation>
    <scope>X-RAY CRYSTALLOGRAPHY (1.90 ANGSTROMS)</scope>
    <scope>SUBUNIT</scope>
</reference>
<gene>
    <name type="primary">mch</name>
    <name type="ordered locus">Caur_0173</name>
</gene>
<proteinExistence type="evidence at protein level"/>